<protein>
    <recommendedName>
        <fullName evidence="6">Large ribosomal subunit protein eL19B</fullName>
    </recommendedName>
    <alternativeName>
        <fullName>60S ribosomal protein L19-B</fullName>
    </alternativeName>
</protein>
<feature type="initiator methionine" description="Removed" evidence="1">
    <location>
        <position position="1"/>
    </location>
</feature>
<feature type="chain" id="PRO_0000347281" description="Large ribosomal subunit protein eL19B">
    <location>
        <begin position="2"/>
        <end position="193"/>
    </location>
</feature>
<feature type="region of interest" description="Disordered" evidence="4">
    <location>
        <begin position="157"/>
        <end position="179"/>
    </location>
</feature>
<feature type="compositionally biased region" description="Basic residues" evidence="4">
    <location>
        <begin position="164"/>
        <end position="174"/>
    </location>
</feature>
<organism>
    <name type="scientific">Schizosaccharomyces pombe (strain 972 / ATCC 24843)</name>
    <name type="common">Fission yeast</name>
    <dbReference type="NCBI Taxonomy" id="284812"/>
    <lineage>
        <taxon>Eukaryota</taxon>
        <taxon>Fungi</taxon>
        <taxon>Dikarya</taxon>
        <taxon>Ascomycota</taxon>
        <taxon>Taphrinomycotina</taxon>
        <taxon>Schizosaccharomycetes</taxon>
        <taxon>Schizosaccharomycetales</taxon>
        <taxon>Schizosaccharomycetaceae</taxon>
        <taxon>Schizosaccharomyces</taxon>
    </lineage>
</organism>
<proteinExistence type="evidence at protein level"/>
<sequence length="193" mass="22754">MANLRTQKRLAASVLKCGKRKVWMDPNEISEISNANSRQNIRKLVKDGLVIRKPNLMHSRFRIRKTHAAKRLGRHTGYGKRKGTAEARMPSTVVWMRRQRVLRRLLRKYRESGKIDKHLYHTLYLEAKGNTFKHKRALIEHIQRAKAEANRTKLIQEQQDARRARAKAARQRRAKAVEEKREQIYTAAEKIEE</sequence>
<keyword id="KW-0002">3D-structure</keyword>
<keyword id="KW-0963">Cytoplasm</keyword>
<keyword id="KW-1185">Reference proteome</keyword>
<keyword id="KW-0687">Ribonucleoprotein</keyword>
<keyword id="KW-0689">Ribosomal protein</keyword>
<accession>O42699</accession>
<accession>Q7LWD0</accession>
<dbReference type="EMBL" id="CU329672">
    <property type="protein sequence ID" value="CAA20680.1"/>
    <property type="molecule type" value="Genomic_DNA"/>
</dbReference>
<dbReference type="EMBL" id="AB010048">
    <property type="protein sequence ID" value="BAA24181.1"/>
    <property type="molecule type" value="mRNA"/>
</dbReference>
<dbReference type="PIR" id="T41071">
    <property type="entry name" value="T41071"/>
</dbReference>
<dbReference type="PIR" id="T43307">
    <property type="entry name" value="T43307"/>
</dbReference>
<dbReference type="RefSeq" id="NP_587807.1">
    <property type="nucleotide sequence ID" value="NM_001022800.2"/>
</dbReference>
<dbReference type="PDB" id="9AXT">
    <property type="method" value="EM"/>
    <property type="resolution" value="2.40 A"/>
    <property type="chains" value="Bd=1-193"/>
</dbReference>
<dbReference type="PDB" id="9AXU">
    <property type="method" value="EM"/>
    <property type="resolution" value="1.94 A"/>
    <property type="chains" value="d=1-193"/>
</dbReference>
<dbReference type="PDB" id="9AXV">
    <property type="method" value="EM"/>
    <property type="resolution" value="2.40 A"/>
    <property type="chains" value="Bd=1-193"/>
</dbReference>
<dbReference type="PDBsum" id="9AXT"/>
<dbReference type="PDBsum" id="9AXU"/>
<dbReference type="PDBsum" id="9AXV"/>
<dbReference type="EMDB" id="EMD-43972"/>
<dbReference type="EMDB" id="EMD-43973"/>
<dbReference type="EMDB" id="EMD-43976"/>
<dbReference type="SMR" id="O42699"/>
<dbReference type="BioGRID" id="275749">
    <property type="interactions" value="58"/>
</dbReference>
<dbReference type="FunCoup" id="O42699">
    <property type="interactions" value="565"/>
</dbReference>
<dbReference type="IntAct" id="O42699">
    <property type="interactions" value="2"/>
</dbReference>
<dbReference type="STRING" id="284812.O42699"/>
<dbReference type="iPTMnet" id="O42699"/>
<dbReference type="PaxDb" id="4896-SPCC1682.14.1"/>
<dbReference type="EnsemblFungi" id="SPCC1682.14.1">
    <property type="protein sequence ID" value="SPCC1682.14.1:pep"/>
    <property type="gene ID" value="SPCC1682.14"/>
</dbReference>
<dbReference type="GeneID" id="2539178"/>
<dbReference type="KEGG" id="spo:2539178"/>
<dbReference type="PomBase" id="SPCC1682.14">
    <property type="gene designation" value="rpl1902"/>
</dbReference>
<dbReference type="VEuPathDB" id="FungiDB:SPCC1682.14"/>
<dbReference type="eggNOG" id="KOG1696">
    <property type="taxonomic scope" value="Eukaryota"/>
</dbReference>
<dbReference type="HOGENOM" id="CLU_083919_0_1_1"/>
<dbReference type="InParanoid" id="O42699"/>
<dbReference type="OMA" id="NRVWIDP"/>
<dbReference type="PhylomeDB" id="O42699"/>
<dbReference type="Reactome" id="R-SPO-156827">
    <property type="pathway name" value="L13a-mediated translational silencing of Ceruloplasmin expression"/>
</dbReference>
<dbReference type="Reactome" id="R-SPO-1799339">
    <property type="pathway name" value="SRP-dependent cotranslational protein targeting to membrane"/>
</dbReference>
<dbReference type="Reactome" id="R-SPO-72689">
    <property type="pathway name" value="Formation of a pool of free 40S subunits"/>
</dbReference>
<dbReference type="Reactome" id="R-SPO-72706">
    <property type="pathway name" value="GTP hydrolysis and joining of the 60S ribosomal subunit"/>
</dbReference>
<dbReference type="Reactome" id="R-SPO-975956">
    <property type="pathway name" value="Nonsense Mediated Decay (NMD) independent of the Exon Junction Complex (EJC)"/>
</dbReference>
<dbReference type="Reactome" id="R-SPO-975957">
    <property type="pathway name" value="Nonsense Mediated Decay (NMD) enhanced by the Exon Junction Complex (EJC)"/>
</dbReference>
<dbReference type="PRO" id="PR:O42699"/>
<dbReference type="Proteomes" id="UP000002485">
    <property type="component" value="Chromosome III"/>
</dbReference>
<dbReference type="GO" id="GO:0005829">
    <property type="term" value="C:cytosol"/>
    <property type="evidence" value="ECO:0007005"/>
    <property type="project" value="PomBase"/>
</dbReference>
<dbReference type="GO" id="GO:0022625">
    <property type="term" value="C:cytosolic large ribosomal subunit"/>
    <property type="evidence" value="ECO:0000269"/>
    <property type="project" value="PomBase"/>
</dbReference>
<dbReference type="GO" id="GO:0030684">
    <property type="term" value="C:preribosome"/>
    <property type="evidence" value="ECO:0000314"/>
    <property type="project" value="PomBase"/>
</dbReference>
<dbReference type="GO" id="GO:0003723">
    <property type="term" value="F:RNA binding"/>
    <property type="evidence" value="ECO:0000318"/>
    <property type="project" value="GO_Central"/>
</dbReference>
<dbReference type="GO" id="GO:0003735">
    <property type="term" value="F:structural constituent of ribosome"/>
    <property type="evidence" value="ECO:0000318"/>
    <property type="project" value="GO_Central"/>
</dbReference>
<dbReference type="GO" id="GO:0002181">
    <property type="term" value="P:cytoplasmic translation"/>
    <property type="evidence" value="ECO:0000266"/>
    <property type="project" value="PomBase"/>
</dbReference>
<dbReference type="CDD" id="cd01417">
    <property type="entry name" value="Ribosomal_L19e_E"/>
    <property type="match status" value="1"/>
</dbReference>
<dbReference type="FunFam" id="1.10.1200.240:FF:000001">
    <property type="entry name" value="Ribosomal protein L19"/>
    <property type="match status" value="1"/>
</dbReference>
<dbReference type="FunFam" id="1.10.1650.10:FF:000001">
    <property type="entry name" value="Ribosomal protein L19"/>
    <property type="match status" value="1"/>
</dbReference>
<dbReference type="Gene3D" id="1.10.1200.240">
    <property type="match status" value="1"/>
</dbReference>
<dbReference type="Gene3D" id="1.10.1650.10">
    <property type="match status" value="1"/>
</dbReference>
<dbReference type="HAMAP" id="MF_01475">
    <property type="entry name" value="Ribosomal_eL19"/>
    <property type="match status" value="1"/>
</dbReference>
<dbReference type="InterPro" id="IPR035970">
    <property type="entry name" value="60S_ribosomal_eL19_sf"/>
</dbReference>
<dbReference type="InterPro" id="IPR039547">
    <property type="entry name" value="Ribosomal_eL19"/>
</dbReference>
<dbReference type="InterPro" id="IPR000196">
    <property type="entry name" value="Ribosomal_eL19_dom"/>
</dbReference>
<dbReference type="InterPro" id="IPR015972">
    <property type="entry name" value="Ribosomal_eL19_dom1"/>
</dbReference>
<dbReference type="InterPro" id="IPR033935">
    <property type="entry name" value="Ribosomal_eL19_euk"/>
</dbReference>
<dbReference type="NCBIfam" id="NF006343">
    <property type="entry name" value="PRK08570.1"/>
    <property type="match status" value="1"/>
</dbReference>
<dbReference type="PANTHER" id="PTHR10722">
    <property type="entry name" value="60S RIBOSOMAL PROTEIN L19"/>
    <property type="match status" value="1"/>
</dbReference>
<dbReference type="Pfam" id="PF01280">
    <property type="entry name" value="Ribosomal_L19e"/>
    <property type="match status" value="1"/>
</dbReference>
<dbReference type="Pfam" id="PF25476">
    <property type="entry name" value="Ribosomal_L19e_C"/>
    <property type="match status" value="1"/>
</dbReference>
<dbReference type="SMART" id="SM01416">
    <property type="entry name" value="Ribosomal_L19e"/>
    <property type="match status" value="1"/>
</dbReference>
<dbReference type="SUPFAM" id="SSF48140">
    <property type="entry name" value="Ribosomal protein L19 (L19e)"/>
    <property type="match status" value="1"/>
</dbReference>
<name>RL19B_SCHPO</name>
<gene>
    <name type="primary">rpl1902</name>
    <name evidence="8" type="synonym">rpl19-2</name>
    <name type="synonym">rpl19b</name>
    <name type="ORF">SPCC1682.14</name>
</gene>
<evidence type="ECO:0000250" key="1">
    <source>
        <dbReference type="UniProtKB" id="P05734"/>
    </source>
</evidence>
<evidence type="ECO:0000250" key="2">
    <source>
        <dbReference type="UniProtKB" id="P0CX83"/>
    </source>
</evidence>
<evidence type="ECO:0000255" key="3"/>
<evidence type="ECO:0000256" key="4">
    <source>
        <dbReference type="SAM" id="MobiDB-lite"/>
    </source>
</evidence>
<evidence type="ECO:0000269" key="5">
    <source>
    </source>
</evidence>
<evidence type="ECO:0000305" key="6"/>
<evidence type="ECO:0000312" key="7">
    <source>
        <dbReference type="EMBL" id="BAA24181.1"/>
    </source>
</evidence>
<evidence type="ECO:0000312" key="8">
    <source>
        <dbReference type="EMBL" id="CAA20680.1"/>
    </source>
</evidence>
<comment type="function">
    <text evidence="2">Component of the ribosome, a large ribonucleoprotein complex responsible for the synthesis of proteins in the cell. The small ribosomal subunit (SSU) binds messenger RNAs (mRNAs) and translates the encoded message by selecting cognate aminoacyl-transfer RNA (tRNA) molecules. The large subunit (LSU) contains the ribosomal catalytic site termed the peptidyl transferase center (PTC), which catalyzes the formation of peptide bonds, thereby polymerizing the amino acids delivered by tRNAs into a polypeptide chain. The nascent polypeptides leave the ribosome through a tunnel in the LSU and interact with protein factors that function in enzymatic processing, targeting, and the membrane insertion of nascent chains at the exit of the ribosomal tunnel. eL19 may play a role in the last stages of translation initiation, in particular subunit joining and shedding/releasing factors.</text>
</comment>
<comment type="subunit">
    <text evidence="2">Component of the large ribosomal subunit (LSU). Mature yeast ribosomes consist of a small (40S) and a large (60S) subunit. The 40S small subunit contains 1 molecule of ribosomal RNA (18S rRNA) and at least 33 different proteins. The large 60S subunit contains 3 rRNA molecules (25S, 5.8S and 5S rRNA) and at least 46 different proteins. eL19 lies in close proximity to the binding site for eukaryotic initiation factor eIF4G.</text>
</comment>
<comment type="subcellular location">
    <subcellularLocation>
        <location evidence="5">Cytoplasm</location>
    </subcellularLocation>
</comment>
<comment type="miscellaneous">
    <text>There are 2 genes for eL19 in S.pombe.</text>
</comment>
<comment type="similarity">
    <text evidence="3">Belongs to the eukaryotic ribosomal protein eL19 family.</text>
</comment>
<reference evidence="8" key="1">
    <citation type="journal article" date="2002" name="Nature">
        <title>The genome sequence of Schizosaccharomyces pombe.</title>
        <authorList>
            <person name="Wood V."/>
            <person name="Gwilliam R."/>
            <person name="Rajandream M.A."/>
            <person name="Lyne M.H."/>
            <person name="Lyne R."/>
            <person name="Stewart A."/>
            <person name="Sgouros J.G."/>
            <person name="Peat N."/>
            <person name="Hayles J."/>
            <person name="Baker S.G."/>
            <person name="Basham D."/>
            <person name="Bowman S."/>
            <person name="Brooks K."/>
            <person name="Brown D."/>
            <person name="Brown S."/>
            <person name="Chillingworth T."/>
            <person name="Churcher C.M."/>
            <person name="Collins M."/>
            <person name="Connor R."/>
            <person name="Cronin A."/>
            <person name="Davis P."/>
            <person name="Feltwell T."/>
            <person name="Fraser A."/>
            <person name="Gentles S."/>
            <person name="Goble A."/>
            <person name="Hamlin N."/>
            <person name="Harris D.E."/>
            <person name="Hidalgo J."/>
            <person name="Hodgson G."/>
            <person name="Holroyd S."/>
            <person name="Hornsby T."/>
            <person name="Howarth S."/>
            <person name="Huckle E.J."/>
            <person name="Hunt S."/>
            <person name="Jagels K."/>
            <person name="James K.D."/>
            <person name="Jones L."/>
            <person name="Jones M."/>
            <person name="Leather S."/>
            <person name="McDonald S."/>
            <person name="McLean J."/>
            <person name="Mooney P."/>
            <person name="Moule S."/>
            <person name="Mungall K.L."/>
            <person name="Murphy L.D."/>
            <person name="Niblett D."/>
            <person name="Odell C."/>
            <person name="Oliver K."/>
            <person name="O'Neil S."/>
            <person name="Pearson D."/>
            <person name="Quail M.A."/>
            <person name="Rabbinowitsch E."/>
            <person name="Rutherford K.M."/>
            <person name="Rutter S."/>
            <person name="Saunders D."/>
            <person name="Seeger K."/>
            <person name="Sharp S."/>
            <person name="Skelton J."/>
            <person name="Simmonds M.N."/>
            <person name="Squares R."/>
            <person name="Squares S."/>
            <person name="Stevens K."/>
            <person name="Taylor K."/>
            <person name="Taylor R.G."/>
            <person name="Tivey A."/>
            <person name="Walsh S.V."/>
            <person name="Warren T."/>
            <person name="Whitehead S."/>
            <person name="Woodward J.R."/>
            <person name="Volckaert G."/>
            <person name="Aert R."/>
            <person name="Robben J."/>
            <person name="Grymonprez B."/>
            <person name="Weltjens I."/>
            <person name="Vanstreels E."/>
            <person name="Rieger M."/>
            <person name="Schaefer M."/>
            <person name="Mueller-Auer S."/>
            <person name="Gabel C."/>
            <person name="Fuchs M."/>
            <person name="Duesterhoeft A."/>
            <person name="Fritzc C."/>
            <person name="Holzer E."/>
            <person name="Moestl D."/>
            <person name="Hilbert H."/>
            <person name="Borzym K."/>
            <person name="Langer I."/>
            <person name="Beck A."/>
            <person name="Lehrach H."/>
            <person name="Reinhardt R."/>
            <person name="Pohl T.M."/>
            <person name="Eger P."/>
            <person name="Zimmermann W."/>
            <person name="Wedler H."/>
            <person name="Wambutt R."/>
            <person name="Purnelle B."/>
            <person name="Goffeau A."/>
            <person name="Cadieu E."/>
            <person name="Dreano S."/>
            <person name="Gloux S."/>
            <person name="Lelaure V."/>
            <person name="Mottier S."/>
            <person name="Galibert F."/>
            <person name="Aves S.J."/>
            <person name="Xiang Z."/>
            <person name="Hunt C."/>
            <person name="Moore K."/>
            <person name="Hurst S.M."/>
            <person name="Lucas M."/>
            <person name="Rochet M."/>
            <person name="Gaillardin C."/>
            <person name="Tallada V.A."/>
            <person name="Garzon A."/>
            <person name="Thode G."/>
            <person name="Daga R.R."/>
            <person name="Cruzado L."/>
            <person name="Jimenez J."/>
            <person name="Sanchez M."/>
            <person name="del Rey F."/>
            <person name="Benito J."/>
            <person name="Dominguez A."/>
            <person name="Revuelta J.L."/>
            <person name="Moreno S."/>
            <person name="Armstrong J."/>
            <person name="Forsburg S.L."/>
            <person name="Cerutti L."/>
            <person name="Lowe T."/>
            <person name="McCombie W.R."/>
            <person name="Paulsen I."/>
            <person name="Potashkin J."/>
            <person name="Shpakovski G.V."/>
            <person name="Ussery D."/>
            <person name="Barrell B.G."/>
            <person name="Nurse P."/>
        </authorList>
    </citation>
    <scope>NUCLEOTIDE SEQUENCE [LARGE SCALE GENOMIC DNA]</scope>
    <source>
        <strain>972 / ATCC 24843</strain>
    </source>
</reference>
<reference evidence="6 7" key="2">
    <citation type="submission" date="1997-12" db="EMBL/GenBank/DDBJ databases">
        <title>S.pombe ribosomal protein L19 homolog.</title>
        <authorList>
            <person name="Kawamukai M."/>
        </authorList>
    </citation>
    <scope>NUCLEOTIDE SEQUENCE [MRNA] OF 8-193</scope>
</reference>
<reference evidence="6" key="3">
    <citation type="journal article" date="2006" name="Nat. Biotechnol.">
        <title>ORFeome cloning and global analysis of protein localization in the fission yeast Schizosaccharomyces pombe.</title>
        <authorList>
            <person name="Matsuyama A."/>
            <person name="Arai R."/>
            <person name="Yashiroda Y."/>
            <person name="Shirai A."/>
            <person name="Kamata A."/>
            <person name="Sekido S."/>
            <person name="Kobayashi Y."/>
            <person name="Hashimoto A."/>
            <person name="Hamamoto M."/>
            <person name="Hiraoka Y."/>
            <person name="Horinouchi S."/>
            <person name="Yoshida M."/>
        </authorList>
    </citation>
    <scope>SUBCELLULAR LOCATION [LARGE SCALE ANALYSIS]</scope>
</reference>